<protein>
    <recommendedName>
        <fullName evidence="1">HTH-type transcriptional regulator UlaR</fullName>
    </recommendedName>
</protein>
<name>ULAR_ECO81</name>
<dbReference type="EMBL" id="CU928162">
    <property type="protein sequence ID" value="CAR10935.1"/>
    <property type="molecule type" value="Genomic_DNA"/>
</dbReference>
<dbReference type="RefSeq" id="WP_000133631.1">
    <property type="nucleotide sequence ID" value="NC_011745.1"/>
</dbReference>
<dbReference type="SMR" id="B7MSL0"/>
<dbReference type="GeneID" id="75202425"/>
<dbReference type="KEGG" id="ecq:ECED1_4978"/>
<dbReference type="HOGENOM" id="CLU_060699_3_2_6"/>
<dbReference type="Proteomes" id="UP000000748">
    <property type="component" value="Chromosome"/>
</dbReference>
<dbReference type="GO" id="GO:0005737">
    <property type="term" value="C:cytoplasm"/>
    <property type="evidence" value="ECO:0007669"/>
    <property type="project" value="UniProtKB-SubCell"/>
</dbReference>
<dbReference type="GO" id="GO:0003677">
    <property type="term" value="F:DNA binding"/>
    <property type="evidence" value="ECO:0007669"/>
    <property type="project" value="UniProtKB-KW"/>
</dbReference>
<dbReference type="GO" id="GO:0003700">
    <property type="term" value="F:DNA-binding transcription factor activity"/>
    <property type="evidence" value="ECO:0007669"/>
    <property type="project" value="InterPro"/>
</dbReference>
<dbReference type="GO" id="GO:0045892">
    <property type="term" value="P:negative regulation of DNA-templated transcription"/>
    <property type="evidence" value="ECO:0007669"/>
    <property type="project" value="UniProtKB-UniRule"/>
</dbReference>
<dbReference type="FunFam" id="1.10.10.10:FF:000160">
    <property type="entry name" value="HTH-type transcriptional regulator UlaR"/>
    <property type="match status" value="1"/>
</dbReference>
<dbReference type="Gene3D" id="1.10.10.10">
    <property type="entry name" value="Winged helix-like DNA-binding domain superfamily/Winged helix DNA-binding domain"/>
    <property type="match status" value="1"/>
</dbReference>
<dbReference type="HAMAP" id="MF_01563">
    <property type="entry name" value="HTH_type_UlaR"/>
    <property type="match status" value="1"/>
</dbReference>
<dbReference type="InterPro" id="IPR050313">
    <property type="entry name" value="Carb_Metab_HTH_regulators"/>
</dbReference>
<dbReference type="InterPro" id="IPR014036">
    <property type="entry name" value="DeoR-like_C"/>
</dbReference>
<dbReference type="InterPro" id="IPR001034">
    <property type="entry name" value="DeoR_HTH"/>
</dbReference>
<dbReference type="InterPro" id="IPR037171">
    <property type="entry name" value="NagB/RpiA_transferase-like"/>
</dbReference>
<dbReference type="InterPro" id="IPR018356">
    <property type="entry name" value="Tscrpt_reg_HTH_DeoR_CS"/>
</dbReference>
<dbReference type="InterPro" id="IPR023711">
    <property type="entry name" value="Tscrpt_reg_HTH_UlaR"/>
</dbReference>
<dbReference type="InterPro" id="IPR036388">
    <property type="entry name" value="WH-like_DNA-bd_sf"/>
</dbReference>
<dbReference type="InterPro" id="IPR036390">
    <property type="entry name" value="WH_DNA-bd_sf"/>
</dbReference>
<dbReference type="NCBIfam" id="NF010034">
    <property type="entry name" value="PRK13509.1"/>
    <property type="match status" value="1"/>
</dbReference>
<dbReference type="PANTHER" id="PTHR30363">
    <property type="entry name" value="HTH-TYPE TRANSCRIPTIONAL REGULATOR SRLR-RELATED"/>
    <property type="match status" value="1"/>
</dbReference>
<dbReference type="PANTHER" id="PTHR30363:SF55">
    <property type="entry name" value="HTH-TYPE TRANSCRIPTIONAL REGULATOR ULAR"/>
    <property type="match status" value="1"/>
</dbReference>
<dbReference type="Pfam" id="PF00455">
    <property type="entry name" value="DeoRC"/>
    <property type="match status" value="1"/>
</dbReference>
<dbReference type="Pfam" id="PF08220">
    <property type="entry name" value="HTH_DeoR"/>
    <property type="match status" value="1"/>
</dbReference>
<dbReference type="PRINTS" id="PR00037">
    <property type="entry name" value="HTHLACR"/>
</dbReference>
<dbReference type="SMART" id="SM01134">
    <property type="entry name" value="DeoRC"/>
    <property type="match status" value="1"/>
</dbReference>
<dbReference type="SMART" id="SM00420">
    <property type="entry name" value="HTH_DEOR"/>
    <property type="match status" value="1"/>
</dbReference>
<dbReference type="SUPFAM" id="SSF100950">
    <property type="entry name" value="NagB/RpiA/CoA transferase-like"/>
    <property type="match status" value="1"/>
</dbReference>
<dbReference type="SUPFAM" id="SSF46785">
    <property type="entry name" value="Winged helix' DNA-binding domain"/>
    <property type="match status" value="1"/>
</dbReference>
<dbReference type="PROSITE" id="PS00894">
    <property type="entry name" value="HTH_DEOR_1"/>
    <property type="match status" value="1"/>
</dbReference>
<dbReference type="PROSITE" id="PS51000">
    <property type="entry name" value="HTH_DEOR_2"/>
    <property type="match status" value="1"/>
</dbReference>
<comment type="function">
    <text evidence="1">Represses ulaG and the ulaABCDEF operon.</text>
</comment>
<comment type="subcellular location">
    <subcellularLocation>
        <location evidence="1">Cytoplasm</location>
    </subcellularLocation>
</comment>
<gene>
    <name evidence="1" type="primary">ulaR</name>
    <name type="ordered locus">ECED1_4978</name>
</gene>
<evidence type="ECO:0000255" key="1">
    <source>
        <dbReference type="HAMAP-Rule" id="MF_01563"/>
    </source>
</evidence>
<sequence length="251" mass="27602">MTEAQRHQILLEMLAQLGFVTVEKVVERLGISPATARRDINKLDESGKLKKVRNGAEAITQQRPRWTPMNLHQAQNHDEKVRIAKAASQLVNPGESVVINCGSTAFLLGREMCGKPVQIITNYLPLANYLIDQEHDSVIIMGGQYNKSQSITLSPQGSENSLYAGHWMFTSGKGLTAEGLYKTDMLTAMAEQKMLSVVGKLVVLVDSSKIGERAGMLFSRADQIDMLITGKNANPEILQQLEAQGVSILRV</sequence>
<proteinExistence type="inferred from homology"/>
<feature type="chain" id="PRO_1000185444" description="HTH-type transcriptional regulator UlaR">
    <location>
        <begin position="1"/>
        <end position="251"/>
    </location>
</feature>
<feature type="domain" description="HTH deoR-type" evidence="1">
    <location>
        <begin position="3"/>
        <end position="58"/>
    </location>
</feature>
<feature type="DNA-binding region" description="H-T-H motif" evidence="1">
    <location>
        <begin position="20"/>
        <end position="39"/>
    </location>
</feature>
<keyword id="KW-0963">Cytoplasm</keyword>
<keyword id="KW-0238">DNA-binding</keyword>
<keyword id="KW-0678">Repressor</keyword>
<keyword id="KW-0804">Transcription</keyword>
<keyword id="KW-0805">Transcription regulation</keyword>
<accession>B7MSL0</accession>
<organism>
    <name type="scientific">Escherichia coli O81 (strain ED1a)</name>
    <dbReference type="NCBI Taxonomy" id="585397"/>
    <lineage>
        <taxon>Bacteria</taxon>
        <taxon>Pseudomonadati</taxon>
        <taxon>Pseudomonadota</taxon>
        <taxon>Gammaproteobacteria</taxon>
        <taxon>Enterobacterales</taxon>
        <taxon>Enterobacteriaceae</taxon>
        <taxon>Escherichia</taxon>
    </lineage>
</organism>
<reference key="1">
    <citation type="journal article" date="2009" name="PLoS Genet.">
        <title>Organised genome dynamics in the Escherichia coli species results in highly diverse adaptive paths.</title>
        <authorList>
            <person name="Touchon M."/>
            <person name="Hoede C."/>
            <person name="Tenaillon O."/>
            <person name="Barbe V."/>
            <person name="Baeriswyl S."/>
            <person name="Bidet P."/>
            <person name="Bingen E."/>
            <person name="Bonacorsi S."/>
            <person name="Bouchier C."/>
            <person name="Bouvet O."/>
            <person name="Calteau A."/>
            <person name="Chiapello H."/>
            <person name="Clermont O."/>
            <person name="Cruveiller S."/>
            <person name="Danchin A."/>
            <person name="Diard M."/>
            <person name="Dossat C."/>
            <person name="Karoui M.E."/>
            <person name="Frapy E."/>
            <person name="Garry L."/>
            <person name="Ghigo J.M."/>
            <person name="Gilles A.M."/>
            <person name="Johnson J."/>
            <person name="Le Bouguenec C."/>
            <person name="Lescat M."/>
            <person name="Mangenot S."/>
            <person name="Martinez-Jehanne V."/>
            <person name="Matic I."/>
            <person name="Nassif X."/>
            <person name="Oztas S."/>
            <person name="Petit M.A."/>
            <person name="Pichon C."/>
            <person name="Rouy Z."/>
            <person name="Ruf C.S."/>
            <person name="Schneider D."/>
            <person name="Tourret J."/>
            <person name="Vacherie B."/>
            <person name="Vallenet D."/>
            <person name="Medigue C."/>
            <person name="Rocha E.P.C."/>
            <person name="Denamur E."/>
        </authorList>
    </citation>
    <scope>NUCLEOTIDE SEQUENCE [LARGE SCALE GENOMIC DNA]</scope>
    <source>
        <strain>ED1a</strain>
    </source>
</reference>